<keyword id="KW-0749">Sporulation</keyword>
<keyword id="KW-0800">Toxin</keyword>
<keyword id="KW-0843">Virulence</keyword>
<reference key="1">
    <citation type="journal article" date="1997" name="Appl. Environ. Microbiol.">
        <title>Contribution of the 65-kilodalton protein encoded by the cloned gene cry19A to the mosquitocidal activity of Bacillus thuringiensis subsp. jegathesan.</title>
        <authorList>
            <person name="Rosso M.-L."/>
            <person name="Delecluse A."/>
        </authorList>
    </citation>
    <scope>NUCLEOTIDE SEQUENCE [GENOMIC DNA]</scope>
    <source>
        <strain>367</strain>
    </source>
</reference>
<dbReference type="EMBL" id="Y07603">
    <property type="protein sequence ID" value="CAA68875.1"/>
    <property type="molecule type" value="Genomic_DNA"/>
</dbReference>
<dbReference type="SMR" id="O32307"/>
<dbReference type="GO" id="GO:0005102">
    <property type="term" value="F:signaling receptor binding"/>
    <property type="evidence" value="ECO:0007669"/>
    <property type="project" value="InterPro"/>
</dbReference>
<dbReference type="GO" id="GO:0090729">
    <property type="term" value="F:toxin activity"/>
    <property type="evidence" value="ECO:0007669"/>
    <property type="project" value="UniProtKB-KW"/>
</dbReference>
<dbReference type="GO" id="GO:0030435">
    <property type="term" value="P:sporulation resulting in formation of a cellular spore"/>
    <property type="evidence" value="ECO:0007669"/>
    <property type="project" value="UniProtKB-KW"/>
</dbReference>
<dbReference type="GO" id="GO:0001907">
    <property type="term" value="P:symbiont-mediated killing of host cell"/>
    <property type="evidence" value="ECO:0007669"/>
    <property type="project" value="InterPro"/>
</dbReference>
<dbReference type="CDD" id="cd04085">
    <property type="entry name" value="delta_endotoxin_C"/>
    <property type="match status" value="1"/>
</dbReference>
<dbReference type="Gene3D" id="2.60.120.260">
    <property type="entry name" value="Galactose-binding domain-like"/>
    <property type="match status" value="1"/>
</dbReference>
<dbReference type="Gene3D" id="2.100.10.10">
    <property type="entry name" value="Pesticidal crystal protein, central domain"/>
    <property type="match status" value="1"/>
</dbReference>
<dbReference type="Gene3D" id="1.20.190.10">
    <property type="entry name" value="Pesticidal crystal protein, N-terminal domain"/>
    <property type="match status" value="1"/>
</dbReference>
<dbReference type="InterPro" id="IPR008979">
    <property type="entry name" value="Galactose-bd-like_sf"/>
</dbReference>
<dbReference type="InterPro" id="IPR038979">
    <property type="entry name" value="Pest_crys"/>
</dbReference>
<dbReference type="InterPro" id="IPR005638">
    <property type="entry name" value="Pest_crys_dom-III"/>
</dbReference>
<dbReference type="InterPro" id="IPR005639">
    <property type="entry name" value="Pest_crys_dom_I"/>
</dbReference>
<dbReference type="InterPro" id="IPR036716">
    <property type="entry name" value="Pest_crys_N_sf"/>
</dbReference>
<dbReference type="InterPro" id="IPR036399">
    <property type="entry name" value="Pest_cryst_cen_dom_sf"/>
</dbReference>
<dbReference type="InterPro" id="IPR001178">
    <property type="entry name" value="Pest_cryst_dom_II"/>
</dbReference>
<dbReference type="PANTHER" id="PTHR37003">
    <property type="entry name" value="ENDOTOXIN_N DOMAIN-CONTAINING PROTEIN-RELATED"/>
    <property type="match status" value="1"/>
</dbReference>
<dbReference type="PANTHER" id="PTHR37003:SF2">
    <property type="entry name" value="PESTICIDAL CRYSTAL PROTEIN N-TERMINAL DOMAIN-CONTAINING PROTEIN"/>
    <property type="match status" value="1"/>
</dbReference>
<dbReference type="Pfam" id="PF03944">
    <property type="entry name" value="Endotoxin_C"/>
    <property type="match status" value="1"/>
</dbReference>
<dbReference type="Pfam" id="PF00555">
    <property type="entry name" value="Endotoxin_M"/>
    <property type="match status" value="1"/>
</dbReference>
<dbReference type="Pfam" id="PF03945">
    <property type="entry name" value="Endotoxin_N"/>
    <property type="match status" value="1"/>
</dbReference>
<dbReference type="SUPFAM" id="SSF51096">
    <property type="entry name" value="delta-Endotoxin (insectocide), middle domain"/>
    <property type="match status" value="1"/>
</dbReference>
<dbReference type="SUPFAM" id="SSF56849">
    <property type="entry name" value="delta-Endotoxin (insectocide), N-terminal domain"/>
    <property type="match status" value="1"/>
</dbReference>
<dbReference type="SUPFAM" id="SSF49785">
    <property type="entry name" value="Galactose-binding domain-like"/>
    <property type="match status" value="1"/>
</dbReference>
<evidence type="ECO:0000305" key="1"/>
<proteinExistence type="evidence at transcript level"/>
<gene>
    <name type="primary">cry19Aa</name>
    <name type="synonym">cryXIXA(a)</name>
</gene>
<protein>
    <recommendedName>
        <fullName>Pesticidal crystal protein Cry19Aa</fullName>
    </recommendedName>
    <alternativeName>
        <fullName>75 kDa crystal protein</fullName>
    </alternativeName>
    <alternativeName>
        <fullName>Crystaline entomocidal protoxin</fullName>
    </alternativeName>
    <alternativeName>
        <fullName>Insecticidal delta-endotoxin CryXIXA(a)</fullName>
    </alternativeName>
</protein>
<feature type="chain" id="PRO_0000174094" description="Pesticidal crystal protein Cry19Aa">
    <location>
        <begin position="1"/>
        <end position="648"/>
    </location>
</feature>
<organism>
    <name type="scientific">Bacillus thuringiensis subsp. jegathesan</name>
    <dbReference type="NCBI Taxonomy" id="56955"/>
    <lineage>
        <taxon>Bacteria</taxon>
        <taxon>Bacillati</taxon>
        <taxon>Bacillota</taxon>
        <taxon>Bacilli</taxon>
        <taxon>Bacillales</taxon>
        <taxon>Bacillaceae</taxon>
        <taxon>Bacillus</taxon>
        <taxon>Bacillus cereus group</taxon>
    </lineage>
</organism>
<sequence>MHYYGNRNEYDILNASSNDSNMSNTYPRYPLANPQQDLMQNTNYKDWLNVCEGYHIENPREASVRAGLGKGLGIVSTIVGFFGGSIILDTIGLFYQISELLWPEDDTQQYTWQDIMNHVEDLIDKRITEVIRGNAIRTLADLQGKVDDYNNWLKKWKDDPKSTGNLSTLVTKFTALDSDFNGAIRTVNNQGSPGYELLLLPVYAQIANLHLLLLRDAQIYGDKWWSARANARDNYYQIQLEKTKEYTEYCINWYNKGLNDFRTAGQWVNFNRYRREMTLTVLDIISMFPIYDARLYPTEVKTELTREIYSDVINGEIYGLMTPYFSFEKAESLYTRAPHLFTWLKGFRFVTNSISYWTFLSGGQNKYSYTNNSSINEGSFRGQDTDYGGTSSTINIPSNSYVYNLWTENYEYIYPWGDPVNITKMNFSVTDNNSSKELIYGAHRTNKPVVRTDFDFLTNKEGTELAKYNDYNHILSYMLINGETFGQKRHGYSFAFTHSSVDPNNTIAANKITQIPVVKASSINGSISIEKGPGFTGGDLVKMRADSGLTMRFKAELLDKKYRVRIRYKCNYSSKLILRKWKGEGYIQQQIHNISPTYGAFSYLESFTITTTENIFDLTMEVTYPYGRQFVEDIPSLILDKIEFLPTN</sequence>
<accession>O32307</accession>
<name>C19AA_BACTJ</name>
<comment type="function">
    <text>Promotes colloidosmotic lysis by binding to the midgut epithelial cells of mosquitos.</text>
</comment>
<comment type="developmental stage">
    <text>The crystal protein is produced during sporulation and is accumulated both as an inclusion and as part of the spore coat.</text>
</comment>
<comment type="miscellaneous">
    <text>Toxic segment of the protein is located in the N-terminus.</text>
</comment>
<comment type="similarity">
    <text evidence="1">Belongs to the delta endotoxin family.</text>
</comment>